<reference key="1">
    <citation type="journal article" date="1999" name="DNA Res.">
        <title>Prediction of the coding sequences of unidentified human genes. XIII. The complete sequences of 100 new cDNA clones from brain which code for large proteins in vitro.</title>
        <authorList>
            <person name="Nagase T."/>
            <person name="Ishikawa K."/>
            <person name="Suyama M."/>
            <person name="Kikuno R."/>
            <person name="Hirosawa M."/>
            <person name="Miyajima N."/>
            <person name="Tanaka A."/>
            <person name="Kotani H."/>
            <person name="Nomura N."/>
            <person name="Ohara O."/>
        </authorList>
    </citation>
    <scope>NUCLEOTIDE SEQUENCE [LARGE SCALE MRNA]</scope>
    <scope>VARIANTS ILE-43 AND LYS-837</scope>
    <source>
        <tissue>Brain</tissue>
    </source>
</reference>
<reference key="2">
    <citation type="journal article" date="2006" name="Nature">
        <title>The DNA sequence and biological annotation of human chromosome 1.</title>
        <authorList>
            <person name="Gregory S.G."/>
            <person name="Barlow K.F."/>
            <person name="McLay K.E."/>
            <person name="Kaul R."/>
            <person name="Swarbreck D."/>
            <person name="Dunham A."/>
            <person name="Scott C.E."/>
            <person name="Howe K.L."/>
            <person name="Woodfine K."/>
            <person name="Spencer C.C.A."/>
            <person name="Jones M.C."/>
            <person name="Gillson C."/>
            <person name="Searle S."/>
            <person name="Zhou Y."/>
            <person name="Kokocinski F."/>
            <person name="McDonald L."/>
            <person name="Evans R."/>
            <person name="Phillips K."/>
            <person name="Atkinson A."/>
            <person name="Cooper R."/>
            <person name="Jones C."/>
            <person name="Hall R.E."/>
            <person name="Andrews T.D."/>
            <person name="Lloyd C."/>
            <person name="Ainscough R."/>
            <person name="Almeida J.P."/>
            <person name="Ambrose K.D."/>
            <person name="Anderson F."/>
            <person name="Andrew R.W."/>
            <person name="Ashwell R.I.S."/>
            <person name="Aubin K."/>
            <person name="Babbage A.K."/>
            <person name="Bagguley C.L."/>
            <person name="Bailey J."/>
            <person name="Beasley H."/>
            <person name="Bethel G."/>
            <person name="Bird C.P."/>
            <person name="Bray-Allen S."/>
            <person name="Brown J.Y."/>
            <person name="Brown A.J."/>
            <person name="Buckley D."/>
            <person name="Burton J."/>
            <person name="Bye J."/>
            <person name="Carder C."/>
            <person name="Chapman J.C."/>
            <person name="Clark S.Y."/>
            <person name="Clarke G."/>
            <person name="Clee C."/>
            <person name="Cobley V."/>
            <person name="Collier R.E."/>
            <person name="Corby N."/>
            <person name="Coville G.J."/>
            <person name="Davies J."/>
            <person name="Deadman R."/>
            <person name="Dunn M."/>
            <person name="Earthrowl M."/>
            <person name="Ellington A.G."/>
            <person name="Errington H."/>
            <person name="Frankish A."/>
            <person name="Frankland J."/>
            <person name="French L."/>
            <person name="Garner P."/>
            <person name="Garnett J."/>
            <person name="Gay L."/>
            <person name="Ghori M.R.J."/>
            <person name="Gibson R."/>
            <person name="Gilby L.M."/>
            <person name="Gillett W."/>
            <person name="Glithero R.J."/>
            <person name="Grafham D.V."/>
            <person name="Griffiths C."/>
            <person name="Griffiths-Jones S."/>
            <person name="Grocock R."/>
            <person name="Hammond S."/>
            <person name="Harrison E.S.I."/>
            <person name="Hart E."/>
            <person name="Haugen E."/>
            <person name="Heath P.D."/>
            <person name="Holmes S."/>
            <person name="Holt K."/>
            <person name="Howden P.J."/>
            <person name="Hunt A.R."/>
            <person name="Hunt S.E."/>
            <person name="Hunter G."/>
            <person name="Isherwood J."/>
            <person name="James R."/>
            <person name="Johnson C."/>
            <person name="Johnson D."/>
            <person name="Joy A."/>
            <person name="Kay M."/>
            <person name="Kershaw J.K."/>
            <person name="Kibukawa M."/>
            <person name="Kimberley A.M."/>
            <person name="King A."/>
            <person name="Knights A.J."/>
            <person name="Lad H."/>
            <person name="Laird G."/>
            <person name="Lawlor S."/>
            <person name="Leongamornlert D.A."/>
            <person name="Lloyd D.M."/>
            <person name="Loveland J."/>
            <person name="Lovell J."/>
            <person name="Lush M.J."/>
            <person name="Lyne R."/>
            <person name="Martin S."/>
            <person name="Mashreghi-Mohammadi M."/>
            <person name="Matthews L."/>
            <person name="Matthews N.S.W."/>
            <person name="McLaren S."/>
            <person name="Milne S."/>
            <person name="Mistry S."/>
            <person name="Moore M.J.F."/>
            <person name="Nickerson T."/>
            <person name="O'Dell C.N."/>
            <person name="Oliver K."/>
            <person name="Palmeiri A."/>
            <person name="Palmer S.A."/>
            <person name="Parker A."/>
            <person name="Patel D."/>
            <person name="Pearce A.V."/>
            <person name="Peck A.I."/>
            <person name="Pelan S."/>
            <person name="Phelps K."/>
            <person name="Phillimore B.J."/>
            <person name="Plumb R."/>
            <person name="Rajan J."/>
            <person name="Raymond C."/>
            <person name="Rouse G."/>
            <person name="Saenphimmachak C."/>
            <person name="Sehra H.K."/>
            <person name="Sheridan E."/>
            <person name="Shownkeen R."/>
            <person name="Sims S."/>
            <person name="Skuce C.D."/>
            <person name="Smith M."/>
            <person name="Steward C."/>
            <person name="Subramanian S."/>
            <person name="Sycamore N."/>
            <person name="Tracey A."/>
            <person name="Tromans A."/>
            <person name="Van Helmond Z."/>
            <person name="Wall M."/>
            <person name="Wallis J.M."/>
            <person name="White S."/>
            <person name="Whitehead S.L."/>
            <person name="Wilkinson J.E."/>
            <person name="Willey D.L."/>
            <person name="Williams H."/>
            <person name="Wilming L."/>
            <person name="Wray P.W."/>
            <person name="Wu Z."/>
            <person name="Coulson A."/>
            <person name="Vaudin M."/>
            <person name="Sulston J.E."/>
            <person name="Durbin R.M."/>
            <person name="Hubbard T."/>
            <person name="Wooster R."/>
            <person name="Dunham I."/>
            <person name="Carter N.P."/>
            <person name="McVean G."/>
            <person name="Ross M.T."/>
            <person name="Harrow J."/>
            <person name="Olson M.V."/>
            <person name="Beck S."/>
            <person name="Rogers J."/>
            <person name="Bentley D.R."/>
        </authorList>
    </citation>
    <scope>NUCLEOTIDE SEQUENCE [LARGE SCALE GENOMIC DNA]</scope>
</reference>
<reference key="3">
    <citation type="journal article" date="2004" name="Genome Res.">
        <title>The status, quality, and expansion of the NIH full-length cDNA project: the Mammalian Gene Collection (MGC).</title>
        <authorList>
            <consortium name="The MGC Project Team"/>
        </authorList>
    </citation>
    <scope>NUCLEOTIDE SEQUENCE [LARGE SCALE MRNA]</scope>
    <scope>VARIANTS ILE-43 AND LYS-837</scope>
</reference>
<reference key="4">
    <citation type="journal article" date="2006" name="Nat. Biotechnol.">
        <title>A probability-based approach for high-throughput protein phosphorylation analysis and site localization.</title>
        <authorList>
            <person name="Beausoleil S.A."/>
            <person name="Villen J."/>
            <person name="Gerber S.A."/>
            <person name="Rush J."/>
            <person name="Gygi S.P."/>
        </authorList>
    </citation>
    <scope>PHOSPHORYLATION [LARGE SCALE ANALYSIS] AT SER-848 AND SER-854</scope>
    <scope>IDENTIFICATION BY MASS SPECTROMETRY [LARGE SCALE ANALYSIS]</scope>
    <source>
        <tissue>Cervix carcinoma</tissue>
    </source>
</reference>
<reference key="5">
    <citation type="journal article" date="2008" name="Proc. Natl. Acad. Sci. U.S.A.">
        <title>A quantitative atlas of mitotic phosphorylation.</title>
        <authorList>
            <person name="Dephoure N."/>
            <person name="Zhou C."/>
            <person name="Villen J."/>
            <person name="Beausoleil S.A."/>
            <person name="Bakalarski C.E."/>
            <person name="Elledge S.J."/>
            <person name="Gygi S.P."/>
        </authorList>
    </citation>
    <scope>PHOSPHORYLATION [LARGE SCALE ANALYSIS] AT SER-472 AND SER-867</scope>
    <scope>IDENTIFICATION BY MASS SPECTROMETRY [LARGE SCALE ANALYSIS]</scope>
    <source>
        <tissue>Cervix carcinoma</tissue>
    </source>
</reference>
<reference key="6">
    <citation type="journal article" date="2013" name="J. Proteome Res.">
        <title>Toward a comprehensive characterization of a human cancer cell phosphoproteome.</title>
        <authorList>
            <person name="Zhou H."/>
            <person name="Di Palma S."/>
            <person name="Preisinger C."/>
            <person name="Peng M."/>
            <person name="Polat A.N."/>
            <person name="Heck A.J."/>
            <person name="Mohammed S."/>
        </authorList>
    </citation>
    <scope>PHOSPHORYLATION [LARGE SCALE ANALYSIS] AT SER-777; SER-867; THR-920 AND SER-940</scope>
    <scope>IDENTIFICATION BY MASS SPECTROMETRY [LARGE SCALE ANALYSIS]</scope>
    <source>
        <tissue>Cervix carcinoma</tissue>
    </source>
</reference>
<reference key="7">
    <citation type="journal article" date="2014" name="J. Proteomics">
        <title>An enzyme assisted RP-RPLC approach for in-depth analysis of human liver phosphoproteome.</title>
        <authorList>
            <person name="Bian Y."/>
            <person name="Song C."/>
            <person name="Cheng K."/>
            <person name="Dong M."/>
            <person name="Wang F."/>
            <person name="Huang J."/>
            <person name="Sun D."/>
            <person name="Wang L."/>
            <person name="Ye M."/>
            <person name="Zou H."/>
        </authorList>
    </citation>
    <scope>PHOSPHORYLATION [LARGE SCALE ANALYSIS] AT SER-459; SER-461; SER-591; SER-777 AND SER-1017</scope>
    <scope>IDENTIFICATION BY MASS SPECTROMETRY [LARGE SCALE ANALYSIS]</scope>
    <source>
        <tissue>Liver</tissue>
    </source>
</reference>
<reference key="8">
    <citation type="submission" date="2007-10" db="PDB data bank">
        <title>Solution structure of the PH domain of PEPP-3 from human.</title>
        <authorList>
            <consortium name="RIKEN structural genomics initiative (RSGI)"/>
        </authorList>
    </citation>
    <scope>STRUCTURE BY NMR OF 57-160</scope>
</reference>
<name>PKHA6_HUMAN</name>
<organism>
    <name type="scientific">Homo sapiens</name>
    <name type="common">Human</name>
    <dbReference type="NCBI Taxonomy" id="9606"/>
    <lineage>
        <taxon>Eukaryota</taxon>
        <taxon>Metazoa</taxon>
        <taxon>Chordata</taxon>
        <taxon>Craniata</taxon>
        <taxon>Vertebrata</taxon>
        <taxon>Euteleostomi</taxon>
        <taxon>Mammalia</taxon>
        <taxon>Eutheria</taxon>
        <taxon>Euarchontoglires</taxon>
        <taxon>Primates</taxon>
        <taxon>Haplorrhini</taxon>
        <taxon>Catarrhini</taxon>
        <taxon>Hominidae</taxon>
        <taxon>Homo</taxon>
    </lineage>
</organism>
<sequence length="1048" mass="117128">MSNKTGGKRPATTNSDIPNHNMVSEVPPERPSVRATRTARKAVAFGKRSHSMKRNPNAPVTKAGWLFKQASSGVKQWNKRWFVLVDRCLFYYKDEKEESILGSIPLLSFRVAAVQPSDNISRKHTFKAEHAGVRTYFFSAESPEEQEAWIQAMGEAARVQIPPAQKSVPQAVRHSHEKPDSENVPPSKHHQQPPHNSLPKPEPEAKTRGEGDGRGCEKAERRPERPEVKKEPPVKANGLPAGPEPASEPGSPYPEGPRVPGGGEQPAQPNGWQYHSPSRPGSTAFPSQDGETGGHRRSFPPRTNPDKIAQRKSSMNQLQQWVNLRRGVPPPEDLRSPSRFYPVSRRVPEYYGPYSSQYPDDYQYYPPGVRPESICSMPAYDRISPPWALEDKRHAFRNGGGPAYQLREWKEPASYGRQDATVWIPSPSRQPVYYDELDAASSSLRRLSLQPRSHSVPRSPSQGSYSRARIYSPVRSPSARFERLPPRSEDIYADPAAYVMRRSISSPKVPPYPEVFRDSLHTYKLNEQDTDKLLGKLCEQNKVVREQDRLVQQLRAEKESLESALMGTHQELEMFGSQPAYPEKLRHKKDSLQNQLINIRVELSQATTALTNSTIEYEHLESEVSALHDDLWEQLNLDTQNEVLNRQIQKEIWRIQDVMEGLRKNNPSRGTDTAKHRGGLGPSATYSSNSPASPLSSASLTSPLSPFSLVSGSQGSPTKPGSNEPKANYEQSKKDPHQTLPLDTPRDISLVPTRQEVEAEKQAALNKVGVVPPRTKSPTDDEVTPSAVVRRNASGLTNGLSSQERPKSAVFPGEGKVKMSVEEQIDRMRRHQSGSMREKRRSLQLPASPAPDPSPRPAYKVVRRHRSIHEVDISNLEAALRAEEPGGHAYETPREEIARLRKMELEPQHYDVDINKELSTPDKVLIPERYIDLEPDTPLSPEELKEKQKKVERIKTLIAKSSMQNVVPIGEGDSVDVPQDSESQLQEQEKRIEISCALATEASRRGRMLSVQCATPSPPTSPASPAPPANPLSSESPRGADSSYTMRV</sequence>
<proteinExistence type="evidence at protein level"/>
<protein>
    <recommendedName>
        <fullName>Pleckstrin homology domain-containing family A member 6</fullName>
        <shortName>PH domain-containing family A member 6</shortName>
    </recommendedName>
    <alternativeName>
        <fullName>Phosphoinositol 3-phosphate-binding protein 3</fullName>
        <shortName>PEPP-3</shortName>
    </alternativeName>
</protein>
<dbReference type="EMBL" id="AB023186">
    <property type="protein sequence ID" value="BAA76813.2"/>
    <property type="status" value="ALT_INIT"/>
    <property type="molecule type" value="mRNA"/>
</dbReference>
<dbReference type="EMBL" id="AL592114">
    <property type="status" value="NOT_ANNOTATED_CDS"/>
    <property type="molecule type" value="Genomic_DNA"/>
</dbReference>
<dbReference type="EMBL" id="BC152475">
    <property type="protein sequence ID" value="AAI52476.1"/>
    <property type="molecule type" value="mRNA"/>
</dbReference>
<dbReference type="CCDS" id="CCDS1444.1"/>
<dbReference type="RefSeq" id="NP_055750.2">
    <property type="nucleotide sequence ID" value="NM_014935.4"/>
</dbReference>
<dbReference type="RefSeq" id="XP_005245025.2">
    <property type="nucleotide sequence ID" value="XM_005244968.4"/>
</dbReference>
<dbReference type="PDB" id="2D9Y">
    <property type="method" value="NMR"/>
    <property type="chains" value="A=57-160"/>
</dbReference>
<dbReference type="PDB" id="2YRY">
    <property type="method" value="NMR"/>
    <property type="chains" value="A=46-160"/>
</dbReference>
<dbReference type="PDBsum" id="2D9Y"/>
<dbReference type="PDBsum" id="2YRY"/>
<dbReference type="BMRB" id="Q9Y2H5"/>
<dbReference type="SMR" id="Q9Y2H5"/>
<dbReference type="BioGRID" id="116541">
    <property type="interactions" value="56"/>
</dbReference>
<dbReference type="FunCoup" id="Q9Y2H5">
    <property type="interactions" value="431"/>
</dbReference>
<dbReference type="IntAct" id="Q9Y2H5">
    <property type="interactions" value="14"/>
</dbReference>
<dbReference type="MINT" id="Q9Y2H5"/>
<dbReference type="STRING" id="9606.ENSP00000272203"/>
<dbReference type="GlyGen" id="Q9Y2H5">
    <property type="glycosylation" value="3 sites, 1 N-linked glycan (1 site), 1 O-linked glycan (1 site)"/>
</dbReference>
<dbReference type="iPTMnet" id="Q9Y2H5"/>
<dbReference type="PhosphoSitePlus" id="Q9Y2H5"/>
<dbReference type="SwissPalm" id="Q9Y2H5"/>
<dbReference type="BioMuta" id="PLEKHA6"/>
<dbReference type="DMDM" id="160334379"/>
<dbReference type="jPOST" id="Q9Y2H5"/>
<dbReference type="MassIVE" id="Q9Y2H5"/>
<dbReference type="PaxDb" id="9606-ENSP00000272203"/>
<dbReference type="PeptideAtlas" id="Q9Y2H5"/>
<dbReference type="ProteomicsDB" id="85784"/>
<dbReference type="Pumba" id="Q9Y2H5"/>
<dbReference type="Antibodypedia" id="34556">
    <property type="antibodies" value="114 antibodies from 19 providers"/>
</dbReference>
<dbReference type="DNASU" id="22874"/>
<dbReference type="Ensembl" id="ENST00000272203.8">
    <property type="protein sequence ID" value="ENSP00000272203.2"/>
    <property type="gene ID" value="ENSG00000143850.17"/>
</dbReference>
<dbReference type="Ensembl" id="ENST00000713653.1">
    <property type="protein sequence ID" value="ENSP00000518955.1"/>
    <property type="gene ID" value="ENSG00000143850.17"/>
</dbReference>
<dbReference type="Ensembl" id="ENST00000713654.1">
    <property type="protein sequence ID" value="ENSP00000518956.1"/>
    <property type="gene ID" value="ENSG00000143850.17"/>
</dbReference>
<dbReference type="Ensembl" id="ENST00000713655.1">
    <property type="protein sequence ID" value="ENSP00000518957.1"/>
    <property type="gene ID" value="ENSG00000143850.17"/>
</dbReference>
<dbReference type="Ensembl" id="ENST00000713656.1">
    <property type="protein sequence ID" value="ENSP00000518958.1"/>
    <property type="gene ID" value="ENSG00000143850.17"/>
</dbReference>
<dbReference type="GeneID" id="22874"/>
<dbReference type="KEGG" id="hsa:22874"/>
<dbReference type="MANE-Select" id="ENST00000272203.8">
    <property type="protein sequence ID" value="ENSP00000272203.2"/>
    <property type="RefSeq nucleotide sequence ID" value="NM_014935.5"/>
    <property type="RefSeq protein sequence ID" value="NP_055750.2"/>
</dbReference>
<dbReference type="UCSC" id="uc001hau.5">
    <property type="organism name" value="human"/>
</dbReference>
<dbReference type="AGR" id="HGNC:17053"/>
<dbReference type="CTD" id="22874"/>
<dbReference type="DisGeNET" id="22874"/>
<dbReference type="GeneCards" id="PLEKHA6"/>
<dbReference type="HGNC" id="HGNC:17053">
    <property type="gene designation" value="PLEKHA6"/>
</dbReference>
<dbReference type="HPA" id="ENSG00000143850">
    <property type="expression patterns" value="Low tissue specificity"/>
</dbReference>
<dbReference type="MIM" id="607771">
    <property type="type" value="gene"/>
</dbReference>
<dbReference type="neXtProt" id="NX_Q9Y2H5"/>
<dbReference type="OpenTargets" id="ENSG00000143850"/>
<dbReference type="PharmGKB" id="PA134955964"/>
<dbReference type="VEuPathDB" id="HostDB:ENSG00000143850"/>
<dbReference type="eggNOG" id="ENOG502QQHD">
    <property type="taxonomic scope" value="Eukaryota"/>
</dbReference>
<dbReference type="GeneTree" id="ENSGT00940000159692"/>
<dbReference type="HOGENOM" id="CLU_008216_0_0_1"/>
<dbReference type="InParanoid" id="Q9Y2H5"/>
<dbReference type="OrthoDB" id="43122at2759"/>
<dbReference type="PAN-GO" id="Q9Y2H5">
    <property type="GO annotations" value="0 GO annotations based on evolutionary models"/>
</dbReference>
<dbReference type="PhylomeDB" id="Q9Y2H5"/>
<dbReference type="TreeFam" id="TF329090"/>
<dbReference type="PathwayCommons" id="Q9Y2H5"/>
<dbReference type="Reactome" id="R-HSA-1660499">
    <property type="pathway name" value="Synthesis of PIPs at the plasma membrane"/>
</dbReference>
<dbReference type="SignaLink" id="Q9Y2H5"/>
<dbReference type="BioGRID-ORCS" id="22874">
    <property type="hits" value="6 hits in 1143 CRISPR screens"/>
</dbReference>
<dbReference type="CD-CODE" id="FB4E32DD">
    <property type="entry name" value="Presynaptic clusters and postsynaptic densities"/>
</dbReference>
<dbReference type="ChiTaRS" id="PLEKHA6">
    <property type="organism name" value="human"/>
</dbReference>
<dbReference type="EvolutionaryTrace" id="Q9Y2H5"/>
<dbReference type="GeneWiki" id="PLEKHA6"/>
<dbReference type="GenomeRNAi" id="22874"/>
<dbReference type="Pharos" id="Q9Y2H5">
    <property type="development level" value="Tbio"/>
</dbReference>
<dbReference type="PRO" id="PR:Q9Y2H5"/>
<dbReference type="Proteomes" id="UP000005640">
    <property type="component" value="Chromosome 1"/>
</dbReference>
<dbReference type="RNAct" id="Q9Y2H5">
    <property type="molecule type" value="protein"/>
</dbReference>
<dbReference type="Bgee" id="ENSG00000143850">
    <property type="expression patterns" value="Expressed in C1 segment of cervical spinal cord and 161 other cell types or tissues"/>
</dbReference>
<dbReference type="ExpressionAtlas" id="Q9Y2H5">
    <property type="expression patterns" value="baseline and differential"/>
</dbReference>
<dbReference type="CDD" id="cd13248">
    <property type="entry name" value="PH_PEPP1_2_3"/>
    <property type="match status" value="1"/>
</dbReference>
<dbReference type="FunFam" id="2.30.29.30:FF:000083">
    <property type="entry name" value="Pleckstrin homology domain-containing family A member 5"/>
    <property type="match status" value="1"/>
</dbReference>
<dbReference type="Gene3D" id="2.30.29.30">
    <property type="entry name" value="Pleckstrin-homology domain (PH domain)/Phosphotyrosine-binding domain (PTB)"/>
    <property type="match status" value="1"/>
</dbReference>
<dbReference type="InterPro" id="IPR011993">
    <property type="entry name" value="PH-like_dom_sf"/>
</dbReference>
<dbReference type="InterPro" id="IPR001849">
    <property type="entry name" value="PH_domain"/>
</dbReference>
<dbReference type="InterPro" id="IPR040392">
    <property type="entry name" value="PKHA4-7_PH"/>
</dbReference>
<dbReference type="PANTHER" id="PTHR12752">
    <property type="entry name" value="PHOSPHOINOSITOL 3-PHOSPHATE-BINDING PROTEIN"/>
    <property type="match status" value="1"/>
</dbReference>
<dbReference type="PANTHER" id="PTHR12752:SF5">
    <property type="entry name" value="PLECKSTRIN HOMOLOGY DOMAIN-CONTAINING FAMILY A MEMBER 6"/>
    <property type="match status" value="1"/>
</dbReference>
<dbReference type="Pfam" id="PF00169">
    <property type="entry name" value="PH"/>
    <property type="match status" value="1"/>
</dbReference>
<dbReference type="SMART" id="SM00233">
    <property type="entry name" value="PH"/>
    <property type="match status" value="1"/>
</dbReference>
<dbReference type="SUPFAM" id="SSF50729">
    <property type="entry name" value="PH domain-like"/>
    <property type="match status" value="1"/>
</dbReference>
<dbReference type="PROSITE" id="PS50003">
    <property type="entry name" value="PH_DOMAIN"/>
    <property type="match status" value="1"/>
</dbReference>
<evidence type="ECO:0000250" key="1">
    <source>
        <dbReference type="UniProtKB" id="Q7TQG1"/>
    </source>
</evidence>
<evidence type="ECO:0000255" key="2">
    <source>
        <dbReference type="PROSITE-ProRule" id="PRU00145"/>
    </source>
</evidence>
<evidence type="ECO:0000256" key="3">
    <source>
        <dbReference type="SAM" id="MobiDB-lite"/>
    </source>
</evidence>
<evidence type="ECO:0000269" key="4">
    <source>
    </source>
</evidence>
<evidence type="ECO:0000269" key="5">
    <source>
    </source>
</evidence>
<evidence type="ECO:0000305" key="6"/>
<evidence type="ECO:0007744" key="7">
    <source>
    </source>
</evidence>
<evidence type="ECO:0007744" key="8">
    <source>
    </source>
</evidence>
<evidence type="ECO:0007744" key="9">
    <source>
    </source>
</evidence>
<evidence type="ECO:0007744" key="10">
    <source>
    </source>
</evidence>
<evidence type="ECO:0007829" key="11">
    <source>
        <dbReference type="PDB" id="2D9Y"/>
    </source>
</evidence>
<keyword id="KW-0002">3D-structure</keyword>
<keyword id="KW-0597">Phosphoprotein</keyword>
<keyword id="KW-1267">Proteomics identification</keyword>
<keyword id="KW-1185">Reference proteome</keyword>
<gene>
    <name type="primary">PLEKHA6</name>
    <name type="synonym">KIAA0969</name>
    <name type="synonym">PEPP3</name>
</gene>
<accession>Q9Y2H5</accession>
<accession>A7MD51</accession>
<accession>Q5VTI6</accession>
<feature type="chain" id="PRO_0000053884" description="Pleckstrin homology domain-containing family A member 6">
    <location>
        <begin position="1"/>
        <end position="1048"/>
    </location>
</feature>
<feature type="domain" description="PH" evidence="2">
    <location>
        <begin position="59"/>
        <end position="158"/>
    </location>
</feature>
<feature type="region of interest" description="Disordered" evidence="3">
    <location>
        <begin position="1"/>
        <end position="36"/>
    </location>
</feature>
<feature type="region of interest" description="Disordered" evidence="3">
    <location>
        <begin position="165"/>
        <end position="318"/>
    </location>
</feature>
<feature type="region of interest" description="Disordered" evidence="3">
    <location>
        <begin position="448"/>
        <end position="467"/>
    </location>
</feature>
<feature type="region of interest" description="Disordered" evidence="3">
    <location>
        <begin position="663"/>
        <end position="746"/>
    </location>
</feature>
<feature type="region of interest" description="Disordered" evidence="3">
    <location>
        <begin position="793"/>
        <end position="858"/>
    </location>
</feature>
<feature type="region of interest" description="Disordered" evidence="3">
    <location>
        <begin position="968"/>
        <end position="989"/>
    </location>
</feature>
<feature type="region of interest" description="Disordered" evidence="3">
    <location>
        <begin position="1005"/>
        <end position="1048"/>
    </location>
</feature>
<feature type="compositionally biased region" description="Polar residues" evidence="3">
    <location>
        <begin position="1"/>
        <end position="22"/>
    </location>
</feature>
<feature type="compositionally biased region" description="Basic and acidic residues" evidence="3">
    <location>
        <begin position="201"/>
        <end position="233"/>
    </location>
</feature>
<feature type="compositionally biased region" description="Polar residues" evidence="3">
    <location>
        <begin position="267"/>
        <end position="290"/>
    </location>
</feature>
<feature type="compositionally biased region" description="Polar residues" evidence="3">
    <location>
        <begin position="456"/>
        <end position="465"/>
    </location>
</feature>
<feature type="compositionally biased region" description="Low complexity" evidence="3">
    <location>
        <begin position="687"/>
        <end position="711"/>
    </location>
</feature>
<feature type="compositionally biased region" description="Polar residues" evidence="3">
    <location>
        <begin position="712"/>
        <end position="721"/>
    </location>
</feature>
<feature type="compositionally biased region" description="Polar residues" evidence="3">
    <location>
        <begin position="794"/>
        <end position="803"/>
    </location>
</feature>
<feature type="compositionally biased region" description="Basic and acidic residues" evidence="3">
    <location>
        <begin position="815"/>
        <end position="827"/>
    </location>
</feature>
<feature type="compositionally biased region" description="Basic residues" evidence="3">
    <location>
        <begin position="828"/>
        <end position="842"/>
    </location>
</feature>
<feature type="compositionally biased region" description="Pro residues" evidence="3">
    <location>
        <begin position="1016"/>
        <end position="1030"/>
    </location>
</feature>
<feature type="modified residue" description="Phosphoserine" evidence="1">
    <location>
        <position position="247"/>
    </location>
</feature>
<feature type="modified residue" description="Phosphoserine" evidence="1">
    <location>
        <position position="251"/>
    </location>
</feature>
<feature type="modified residue" description="Phosphoserine" evidence="1">
    <location>
        <position position="314"/>
    </location>
</feature>
<feature type="modified residue" description="Phosphoserine" evidence="10">
    <location>
        <position position="459"/>
    </location>
</feature>
<feature type="modified residue" description="Phosphoserine" evidence="10">
    <location>
        <position position="461"/>
    </location>
</feature>
<feature type="modified residue" description="Phosphoserine" evidence="8">
    <location>
        <position position="472"/>
    </location>
</feature>
<feature type="modified residue" description="Phosphotyrosine" evidence="1">
    <location>
        <position position="492"/>
    </location>
</feature>
<feature type="modified residue" description="Phosphoserine" evidence="10">
    <location>
        <position position="591"/>
    </location>
</feature>
<feature type="modified residue" description="Phosphothreonine" evidence="1">
    <location>
        <position position="744"/>
    </location>
</feature>
<feature type="modified residue" description="Phosphoserine" evidence="9 10">
    <location>
        <position position="777"/>
    </location>
</feature>
<feature type="modified residue" description="Phosphothreonine" evidence="1">
    <location>
        <position position="784"/>
    </location>
</feature>
<feature type="modified residue" description="Phosphoserine" evidence="1">
    <location>
        <position position="801"/>
    </location>
</feature>
<feature type="modified residue" description="Phosphoserine" evidence="7">
    <location>
        <position position="848"/>
    </location>
</feature>
<feature type="modified residue" description="Phosphoserine" evidence="7">
    <location>
        <position position="854"/>
    </location>
</feature>
<feature type="modified residue" description="Phosphoserine" evidence="8 9">
    <location>
        <position position="867"/>
    </location>
</feature>
<feature type="modified residue" description="Phosphothreonine" evidence="9">
    <location>
        <position position="920"/>
    </location>
</feature>
<feature type="modified residue" description="Phosphoserine" evidence="9">
    <location>
        <position position="940"/>
    </location>
</feature>
<feature type="modified residue" description="Phosphothreonine" evidence="1">
    <location>
        <position position="1015"/>
    </location>
</feature>
<feature type="modified residue" description="Phosphoserine" evidence="10">
    <location>
        <position position="1017"/>
    </location>
</feature>
<feature type="modified residue" description="Phosphothreonine" evidence="1">
    <location>
        <position position="1020"/>
    </location>
</feature>
<feature type="modified residue" description="Phosphoserine" evidence="1">
    <location>
        <position position="1021"/>
    </location>
</feature>
<feature type="modified residue" description="Phosphoserine" evidence="1">
    <location>
        <position position="1024"/>
    </location>
</feature>
<feature type="sequence variant" id="VAR_037145" description="In dbSNP:rs10900571." evidence="4 5">
    <original>V</original>
    <variation>I</variation>
    <location>
        <position position="43"/>
    </location>
</feature>
<feature type="sequence variant" id="VAR_037146" description="In dbSNP:rs10900562." evidence="4 5">
    <original>R</original>
    <variation>K</variation>
    <location>
        <position position="837"/>
    </location>
</feature>
<feature type="strand" evidence="11">
    <location>
        <begin position="62"/>
        <end position="69"/>
    </location>
</feature>
<feature type="strand" evidence="11">
    <location>
        <begin position="73"/>
        <end position="75"/>
    </location>
</feature>
<feature type="strand" evidence="11">
    <location>
        <begin position="77"/>
        <end position="85"/>
    </location>
</feature>
<feature type="strand" evidence="11">
    <location>
        <begin position="88"/>
        <end position="94"/>
    </location>
</feature>
<feature type="strand" evidence="11">
    <location>
        <begin position="102"/>
        <end position="105"/>
    </location>
</feature>
<feature type="strand" evidence="11">
    <location>
        <begin position="110"/>
        <end position="113"/>
    </location>
</feature>
<feature type="turn" evidence="11">
    <location>
        <begin position="116"/>
        <end position="119"/>
    </location>
</feature>
<feature type="strand" evidence="11">
    <location>
        <begin position="123"/>
        <end position="129"/>
    </location>
</feature>
<feature type="strand" evidence="11">
    <location>
        <begin position="131"/>
        <end position="133"/>
    </location>
</feature>
<feature type="strand" evidence="11">
    <location>
        <begin position="135"/>
        <end position="139"/>
    </location>
</feature>
<feature type="helix" evidence="11">
    <location>
        <begin position="143"/>
        <end position="155"/>
    </location>
</feature>
<comment type="interaction">
    <interactant intactId="EBI-1171228">
        <id>Q9Y2H5</id>
    </interactant>
    <interactant intactId="EBI-720977">
        <id>Q9H832</id>
        <label>UBE2Z</label>
    </interactant>
    <organismsDiffer>false</organismsDiffer>
    <experiments>3</experiments>
</comment>
<comment type="tissue specificity">
    <text>Highly expressed in heart, kidney and throughout the brain.</text>
</comment>
<comment type="sequence caution" evidence="6">
    <conflict type="erroneous initiation">
        <sequence resource="EMBL-CDS" id="BAA76813"/>
    </conflict>
</comment>